<organism>
    <name type="scientific">Rattus norvegicus</name>
    <name type="common">Rat</name>
    <dbReference type="NCBI Taxonomy" id="10116"/>
    <lineage>
        <taxon>Eukaryota</taxon>
        <taxon>Metazoa</taxon>
        <taxon>Chordata</taxon>
        <taxon>Craniata</taxon>
        <taxon>Vertebrata</taxon>
        <taxon>Euteleostomi</taxon>
        <taxon>Mammalia</taxon>
        <taxon>Eutheria</taxon>
        <taxon>Euarchontoglires</taxon>
        <taxon>Glires</taxon>
        <taxon>Rodentia</taxon>
        <taxon>Myomorpha</taxon>
        <taxon>Muroidea</taxon>
        <taxon>Muridae</taxon>
        <taxon>Murinae</taxon>
        <taxon>Rattus</taxon>
    </lineage>
</organism>
<evidence type="ECO:0000250" key="1">
    <source>
        <dbReference type="UniProtKB" id="Q7M6Y2"/>
    </source>
</evidence>
<evidence type="ECO:0000255" key="2">
    <source>
        <dbReference type="PROSITE-ProRule" id="PRU00267"/>
    </source>
</evidence>
<evidence type="ECO:0000256" key="3">
    <source>
        <dbReference type="SAM" id="MobiDB-lite"/>
    </source>
</evidence>
<gene>
    <name type="primary">Sox11</name>
</gene>
<comment type="function">
    <text evidence="1">Transcription factor that acts as a transcriptional activator (By similarity). Binds cooperatively with POU3F2/BRN2 or POU3F1/OCT6 to gene promoters, which enhances transcriptional activation (By similarity). Acts as a transcriptional activator of TEAD2 by binding to its gene promoter and first intron (By similarity). Plays a redundant role with SOX4 and SOX12 in cell survival of developing tissues such as the neural tube, branchial arches and somites, thereby contributing to organogenesis (By similarity).</text>
</comment>
<comment type="subcellular location">
    <subcellularLocation>
        <location evidence="1 2">Nucleus</location>
    </subcellularLocation>
</comment>
<feature type="chain" id="PRO_0000244267" description="Transcription factor SOX-11">
    <location>
        <begin position="1"/>
        <end position="395"/>
    </location>
</feature>
<feature type="DNA-binding region" description="HMG box" evidence="2">
    <location>
        <begin position="49"/>
        <end position="117"/>
    </location>
</feature>
<feature type="region of interest" description="Disordered" evidence="3">
    <location>
        <begin position="1"/>
        <end position="22"/>
    </location>
</feature>
<feature type="region of interest" description="Disordered" evidence="3">
    <location>
        <begin position="114"/>
        <end position="258"/>
    </location>
</feature>
<feature type="region of interest" description="Disordered" evidence="3">
    <location>
        <begin position="276"/>
        <end position="312"/>
    </location>
</feature>
<feature type="region of interest" description="Required for transcriptional activation activity and synergistic coactivation of transcriptional activity with POU3F2" evidence="1">
    <location>
        <begin position="363"/>
        <end position="395"/>
    </location>
</feature>
<feature type="compositionally biased region" description="Polar residues" evidence="3">
    <location>
        <begin position="1"/>
        <end position="11"/>
    </location>
</feature>
<feature type="compositionally biased region" description="Low complexity" evidence="3">
    <location>
        <begin position="158"/>
        <end position="174"/>
    </location>
</feature>
<feature type="compositionally biased region" description="Acidic residues" evidence="3">
    <location>
        <begin position="187"/>
        <end position="199"/>
    </location>
</feature>
<feature type="compositionally biased region" description="Low complexity" evidence="3">
    <location>
        <begin position="289"/>
        <end position="309"/>
    </location>
</feature>
<keyword id="KW-0010">Activator</keyword>
<keyword id="KW-0217">Developmental protein</keyword>
<keyword id="KW-0221">Differentiation</keyword>
<keyword id="KW-0238">DNA-binding</keyword>
<keyword id="KW-0524">Neurogenesis</keyword>
<keyword id="KW-0539">Nucleus</keyword>
<keyword id="KW-1185">Reference proteome</keyword>
<keyword id="KW-0804">Transcription</keyword>
<keyword id="KW-0805">Transcription regulation</keyword>
<dbReference type="EMBL" id="AJ004858">
    <property type="protein sequence ID" value="CAA06166.1"/>
    <property type="molecule type" value="mRNA"/>
</dbReference>
<dbReference type="RefSeq" id="NP_445801.1">
    <property type="nucleotide sequence ID" value="NM_053349.2"/>
</dbReference>
<dbReference type="SMR" id="P0C1G9"/>
<dbReference type="FunCoup" id="P0C1G9">
    <property type="interactions" value="741"/>
</dbReference>
<dbReference type="STRING" id="10116.ENSRNOP00000040127"/>
<dbReference type="PhosphoSitePlus" id="P0C1G9"/>
<dbReference type="PaxDb" id="10116-ENSRNOP00000040127"/>
<dbReference type="Ensembl" id="ENSRNOT00000045963.5">
    <property type="protein sequence ID" value="ENSRNOP00000040127.3"/>
    <property type="gene ID" value="ENSRNOG00000030034.5"/>
</dbReference>
<dbReference type="GeneID" id="84046"/>
<dbReference type="KEGG" id="rno:84046"/>
<dbReference type="AGR" id="RGD:69351"/>
<dbReference type="CTD" id="6664"/>
<dbReference type="RGD" id="69351">
    <property type="gene designation" value="Sox11"/>
</dbReference>
<dbReference type="eggNOG" id="KOG0527">
    <property type="taxonomic scope" value="Eukaryota"/>
</dbReference>
<dbReference type="GeneTree" id="ENSGT00940000161652"/>
<dbReference type="HOGENOM" id="CLU_043342_0_0_1"/>
<dbReference type="InParanoid" id="P0C1G9"/>
<dbReference type="OMA" id="VKCVFMD"/>
<dbReference type="OrthoDB" id="6247875at2759"/>
<dbReference type="PhylomeDB" id="P0C1G9"/>
<dbReference type="TreeFam" id="TF351735"/>
<dbReference type="PRO" id="PR:P0C1G9"/>
<dbReference type="Proteomes" id="UP000002494">
    <property type="component" value="Chromosome 6"/>
</dbReference>
<dbReference type="Bgee" id="ENSRNOG00000030034">
    <property type="expression patterns" value="Expressed in brain and 6 other cell types or tissues"/>
</dbReference>
<dbReference type="GO" id="GO:0005654">
    <property type="term" value="C:nucleoplasm"/>
    <property type="evidence" value="ECO:0007669"/>
    <property type="project" value="Ensembl"/>
</dbReference>
<dbReference type="GO" id="GO:0005634">
    <property type="term" value="C:nucleus"/>
    <property type="evidence" value="ECO:0000314"/>
    <property type="project" value="UniProtKB"/>
</dbReference>
<dbReference type="GO" id="GO:0005886">
    <property type="term" value="C:plasma membrane"/>
    <property type="evidence" value="ECO:0007669"/>
    <property type="project" value="Ensembl"/>
</dbReference>
<dbReference type="GO" id="GO:0000987">
    <property type="term" value="F:cis-regulatory region sequence-specific DNA binding"/>
    <property type="evidence" value="ECO:0000250"/>
    <property type="project" value="UniProtKB"/>
</dbReference>
<dbReference type="GO" id="GO:0003677">
    <property type="term" value="F:DNA binding"/>
    <property type="evidence" value="ECO:0000266"/>
    <property type="project" value="RGD"/>
</dbReference>
<dbReference type="GO" id="GO:0001228">
    <property type="term" value="F:DNA-binding transcription activator activity, RNA polymerase II-specific"/>
    <property type="evidence" value="ECO:0000314"/>
    <property type="project" value="GO_Central"/>
</dbReference>
<dbReference type="GO" id="GO:0003700">
    <property type="term" value="F:DNA-binding transcription factor activity"/>
    <property type="evidence" value="ECO:0000314"/>
    <property type="project" value="RGD"/>
</dbReference>
<dbReference type="GO" id="GO:0000978">
    <property type="term" value="F:RNA polymerase II cis-regulatory region sequence-specific DNA binding"/>
    <property type="evidence" value="ECO:0000266"/>
    <property type="project" value="RGD"/>
</dbReference>
<dbReference type="GO" id="GO:0000976">
    <property type="term" value="F:transcription cis-regulatory region binding"/>
    <property type="evidence" value="ECO:0000314"/>
    <property type="project" value="GO_Central"/>
</dbReference>
<dbReference type="GO" id="GO:0007420">
    <property type="term" value="P:brain development"/>
    <property type="evidence" value="ECO:0000318"/>
    <property type="project" value="GO_Central"/>
</dbReference>
<dbReference type="GO" id="GO:0048593">
    <property type="term" value="P:camera-type eye morphogenesis"/>
    <property type="evidence" value="ECO:0000318"/>
    <property type="project" value="GO_Central"/>
</dbReference>
<dbReference type="GO" id="GO:0061386">
    <property type="term" value="P:closure of optic fissure"/>
    <property type="evidence" value="ECO:0000250"/>
    <property type="project" value="UniProtKB"/>
</dbReference>
<dbReference type="GO" id="GO:0061303">
    <property type="term" value="P:cornea development in camera-type eye"/>
    <property type="evidence" value="ECO:0000250"/>
    <property type="project" value="UniProtKB"/>
</dbReference>
<dbReference type="GO" id="GO:0048557">
    <property type="term" value="P:embryonic digestive tract morphogenesis"/>
    <property type="evidence" value="ECO:0000250"/>
    <property type="project" value="UniProtKB"/>
</dbReference>
<dbReference type="GO" id="GO:0048704">
    <property type="term" value="P:embryonic skeletal system morphogenesis"/>
    <property type="evidence" value="ECO:0000250"/>
    <property type="project" value="UniProtKB"/>
</dbReference>
<dbReference type="GO" id="GO:0061029">
    <property type="term" value="P:eyelid development in camera-type eye"/>
    <property type="evidence" value="ECO:0000250"/>
    <property type="project" value="UniProtKB"/>
</dbReference>
<dbReference type="GO" id="GO:0021782">
    <property type="term" value="P:glial cell development"/>
    <property type="evidence" value="ECO:0000266"/>
    <property type="project" value="RGD"/>
</dbReference>
<dbReference type="GO" id="GO:0014009">
    <property type="term" value="P:glial cell proliferation"/>
    <property type="evidence" value="ECO:0000250"/>
    <property type="project" value="UniProtKB"/>
</dbReference>
<dbReference type="GO" id="GO:0060022">
    <property type="term" value="P:hard palate development"/>
    <property type="evidence" value="ECO:0000250"/>
    <property type="project" value="UniProtKB"/>
</dbReference>
<dbReference type="GO" id="GO:0001822">
    <property type="term" value="P:kidney development"/>
    <property type="evidence" value="ECO:0000270"/>
    <property type="project" value="RGD"/>
</dbReference>
<dbReference type="GO" id="GO:0002089">
    <property type="term" value="P:lens morphogenesis in camera-type eye"/>
    <property type="evidence" value="ECO:0000250"/>
    <property type="project" value="UniProtKB"/>
</dbReference>
<dbReference type="GO" id="GO:0060425">
    <property type="term" value="P:lung morphogenesis"/>
    <property type="evidence" value="ECO:0000250"/>
    <property type="project" value="UniProtKB"/>
</dbReference>
<dbReference type="GO" id="GO:0010629">
    <property type="term" value="P:negative regulation of gene expression"/>
    <property type="evidence" value="ECO:0000250"/>
    <property type="project" value="UniProtKB"/>
</dbReference>
<dbReference type="GO" id="GO:0060253">
    <property type="term" value="P:negative regulation of glial cell proliferation"/>
    <property type="evidence" value="ECO:0000250"/>
    <property type="project" value="UniProtKB"/>
</dbReference>
<dbReference type="GO" id="GO:0050672">
    <property type="term" value="P:negative regulation of lymphocyte proliferation"/>
    <property type="evidence" value="ECO:0000266"/>
    <property type="project" value="RGD"/>
</dbReference>
<dbReference type="GO" id="GO:0000122">
    <property type="term" value="P:negative regulation of transcription by RNA polymerase II"/>
    <property type="evidence" value="ECO:0000250"/>
    <property type="project" value="UniProtKB"/>
</dbReference>
<dbReference type="GO" id="GO:2000678">
    <property type="term" value="P:negative regulation of transcription regulatory region DNA binding"/>
    <property type="evidence" value="ECO:0000315"/>
    <property type="project" value="UniProtKB"/>
</dbReference>
<dbReference type="GO" id="GO:0007399">
    <property type="term" value="P:nervous system development"/>
    <property type="evidence" value="ECO:0000250"/>
    <property type="project" value="UniProtKB"/>
</dbReference>
<dbReference type="GO" id="GO:0060563">
    <property type="term" value="P:neuroepithelial cell differentiation"/>
    <property type="evidence" value="ECO:0000250"/>
    <property type="project" value="UniProtKB"/>
</dbReference>
<dbReference type="GO" id="GO:0030182">
    <property type="term" value="P:neuron differentiation"/>
    <property type="evidence" value="ECO:0000266"/>
    <property type="project" value="RGD"/>
</dbReference>
<dbReference type="GO" id="GO:0003357">
    <property type="term" value="P:noradrenergic neuron differentiation"/>
    <property type="evidence" value="ECO:0000315"/>
    <property type="project" value="UniProtKB"/>
</dbReference>
<dbReference type="GO" id="GO:0014003">
    <property type="term" value="P:oligodendrocyte development"/>
    <property type="evidence" value="ECO:0000270"/>
    <property type="project" value="RGD"/>
</dbReference>
<dbReference type="GO" id="GO:0003151">
    <property type="term" value="P:outflow tract morphogenesis"/>
    <property type="evidence" value="ECO:0000250"/>
    <property type="project" value="UniProtKB"/>
</dbReference>
<dbReference type="GO" id="GO:0030513">
    <property type="term" value="P:positive regulation of BMP signaling pathway"/>
    <property type="evidence" value="ECO:0000250"/>
    <property type="project" value="UniProtKB"/>
</dbReference>
<dbReference type="GO" id="GO:0045893">
    <property type="term" value="P:positive regulation of DNA-templated transcription"/>
    <property type="evidence" value="ECO:0000266"/>
    <property type="project" value="RGD"/>
</dbReference>
<dbReference type="GO" id="GO:0010628">
    <property type="term" value="P:positive regulation of gene expression"/>
    <property type="evidence" value="ECO:0000250"/>
    <property type="project" value="UniProtKB"/>
</dbReference>
<dbReference type="GO" id="GO:0035332">
    <property type="term" value="P:positive regulation of hippo signaling"/>
    <property type="evidence" value="ECO:0000250"/>
    <property type="project" value="UniProtKB"/>
</dbReference>
<dbReference type="GO" id="GO:0046887">
    <property type="term" value="P:positive regulation of hormone secretion"/>
    <property type="evidence" value="ECO:0000250"/>
    <property type="project" value="UniProtKB"/>
</dbReference>
<dbReference type="GO" id="GO:2001111">
    <property type="term" value="P:positive regulation of lens epithelial cell proliferation"/>
    <property type="evidence" value="ECO:0000250"/>
    <property type="project" value="UniProtKB"/>
</dbReference>
<dbReference type="GO" id="GO:0050769">
    <property type="term" value="P:positive regulation of neurogenesis"/>
    <property type="evidence" value="ECO:0000250"/>
    <property type="project" value="UniProtKB"/>
</dbReference>
<dbReference type="GO" id="GO:0045666">
    <property type="term" value="P:positive regulation of neuron differentiation"/>
    <property type="evidence" value="ECO:0000250"/>
    <property type="project" value="UniProtKB"/>
</dbReference>
<dbReference type="GO" id="GO:0045778">
    <property type="term" value="P:positive regulation of ossification"/>
    <property type="evidence" value="ECO:0000250"/>
    <property type="project" value="UniProtKB"/>
</dbReference>
<dbReference type="GO" id="GO:0045669">
    <property type="term" value="P:positive regulation of osteoblast differentiation"/>
    <property type="evidence" value="ECO:0000250"/>
    <property type="project" value="UniProtKB"/>
</dbReference>
<dbReference type="GO" id="GO:2000648">
    <property type="term" value="P:positive regulation of stem cell proliferation"/>
    <property type="evidence" value="ECO:0000250"/>
    <property type="project" value="UniProtKB"/>
</dbReference>
<dbReference type="GO" id="GO:0045944">
    <property type="term" value="P:positive regulation of transcription by RNA polymerase II"/>
    <property type="evidence" value="ECO:0000315"/>
    <property type="project" value="RGD"/>
</dbReference>
<dbReference type="GO" id="GO:0017015">
    <property type="term" value="P:regulation of transforming growth factor beta receptor signaling pathway"/>
    <property type="evidence" value="ECO:0000266"/>
    <property type="project" value="RGD"/>
</dbReference>
<dbReference type="GO" id="GO:0035914">
    <property type="term" value="P:skeletal muscle cell differentiation"/>
    <property type="evidence" value="ECO:0000266"/>
    <property type="project" value="RGD"/>
</dbReference>
<dbReference type="GO" id="GO:0060023">
    <property type="term" value="P:soft palate development"/>
    <property type="evidence" value="ECO:0000250"/>
    <property type="project" value="UniProtKB"/>
</dbReference>
<dbReference type="GO" id="GO:0021510">
    <property type="term" value="P:spinal cord development"/>
    <property type="evidence" value="ECO:0000250"/>
    <property type="project" value="UniProtKB"/>
</dbReference>
<dbReference type="GO" id="GO:0048485">
    <property type="term" value="P:sympathetic nervous system development"/>
    <property type="evidence" value="ECO:0000250"/>
    <property type="project" value="UniProtKB"/>
</dbReference>
<dbReference type="GO" id="GO:0060412">
    <property type="term" value="P:ventricular septum morphogenesis"/>
    <property type="evidence" value="ECO:0000250"/>
    <property type="project" value="UniProtKB"/>
</dbReference>
<dbReference type="CDD" id="cd22037">
    <property type="entry name" value="HMG-box_SoxC_SOX11"/>
    <property type="match status" value="1"/>
</dbReference>
<dbReference type="FunFam" id="1.10.30.10:FF:000007">
    <property type="entry name" value="Transcription factor SOX"/>
    <property type="match status" value="1"/>
</dbReference>
<dbReference type="Gene3D" id="1.10.30.10">
    <property type="entry name" value="High mobility group box domain"/>
    <property type="match status" value="1"/>
</dbReference>
<dbReference type="InterPro" id="IPR009071">
    <property type="entry name" value="HMG_box_dom"/>
</dbReference>
<dbReference type="InterPro" id="IPR036910">
    <property type="entry name" value="HMG_box_dom_sf"/>
</dbReference>
<dbReference type="InterPro" id="IPR017386">
    <property type="entry name" value="SOX-12/11/4"/>
</dbReference>
<dbReference type="InterPro" id="IPR050140">
    <property type="entry name" value="SRY-related_HMG-box_TF-like"/>
</dbReference>
<dbReference type="PANTHER" id="PTHR10270">
    <property type="entry name" value="SOX TRANSCRIPTION FACTOR"/>
    <property type="match status" value="1"/>
</dbReference>
<dbReference type="PANTHER" id="PTHR10270:SF113">
    <property type="entry name" value="TRANSCRIPTION FACTOR SOX-11"/>
    <property type="match status" value="1"/>
</dbReference>
<dbReference type="Pfam" id="PF00505">
    <property type="entry name" value="HMG_box"/>
    <property type="match status" value="1"/>
</dbReference>
<dbReference type="PIRSF" id="PIRSF038098">
    <property type="entry name" value="SOX-12/11/4a"/>
    <property type="match status" value="1"/>
</dbReference>
<dbReference type="SMART" id="SM00398">
    <property type="entry name" value="HMG"/>
    <property type="match status" value="1"/>
</dbReference>
<dbReference type="SUPFAM" id="SSF47095">
    <property type="entry name" value="HMG-box"/>
    <property type="match status" value="1"/>
</dbReference>
<dbReference type="PROSITE" id="PS50118">
    <property type="entry name" value="HMG_BOX_2"/>
    <property type="match status" value="1"/>
</dbReference>
<reference key="1">
    <citation type="journal article" date="1998" name="J. Biol. Chem.">
        <title>Cooperative function of POU proteins and SOX proteins in glial cells.</title>
        <authorList>
            <person name="Kuhlbrodt K."/>
            <person name="Herbarth B."/>
            <person name="Sock E."/>
            <person name="Enderich J."/>
            <person name="Hermans-Borgmeyer I."/>
            <person name="Wegner M."/>
        </authorList>
    </citation>
    <scope>NUCLEOTIDE SEQUENCE [MRNA]</scope>
</reference>
<accession>P0C1G9</accession>
<accession>O35178</accession>
<accession>O89036</accession>
<accession>Q04889</accession>
<name>SOX11_RAT</name>
<proteinExistence type="evidence at transcript level"/>
<protein>
    <recommendedName>
        <fullName>Transcription factor SOX-11</fullName>
    </recommendedName>
</protein>
<sequence length="395" mass="42599">MVQQAESSEAESNLPRDALDTEEGEFMACSPVALDESDPDWCKTASGHIKRPMNAFMVWSKIERRKIMEQSPDMHNAEISKRLGKRWKMLKDSEKIPFIREAERLRLKHMADYPDYKYRPRKKPKTDPAAKPSAGQSPDKSAAGAKAAKGPGKKCAKLKAPAGKAGAGKAAQPGDCGAGKAAKCVFLDDDDEEDDEDDELQLRPKPDADDDDDEPAHSHLLPPPAQQQPPQLLRRYSVAKVPASPTLSSAAESPEGASLYDEVRAGGRLYYSFKNITKQQPPPAPPALSPASSRCVSTSSSSGSSSGSGAEDADDLMFDLSLNFSQGAHSACEQPLGAGAAGNLSLSLVDKDLDSFSEGSLGSHFEFPDYCTPELSEMIAGDWLEANFSDLVFTY</sequence>